<protein>
    <recommendedName>
        <fullName evidence="1">Large ribosomal subunit protein uL24</fullName>
    </recommendedName>
    <alternativeName>
        <fullName evidence="2">50S ribosomal protein L24</fullName>
    </alternativeName>
</protein>
<dbReference type="EMBL" id="AE017126">
    <property type="protein sequence ID" value="AAQ00745.1"/>
    <property type="molecule type" value="Genomic_DNA"/>
</dbReference>
<dbReference type="RefSeq" id="NP_876092.1">
    <property type="nucleotide sequence ID" value="NC_005042.1"/>
</dbReference>
<dbReference type="SMR" id="Q7V9X3"/>
<dbReference type="STRING" id="167539.Pro_1701"/>
<dbReference type="EnsemblBacteria" id="AAQ00745">
    <property type="protein sequence ID" value="AAQ00745"/>
    <property type="gene ID" value="Pro_1701"/>
</dbReference>
<dbReference type="KEGG" id="pma:Pro_1701"/>
<dbReference type="PATRIC" id="fig|167539.5.peg.1796"/>
<dbReference type="eggNOG" id="COG0198">
    <property type="taxonomic scope" value="Bacteria"/>
</dbReference>
<dbReference type="HOGENOM" id="CLU_093315_2_3_3"/>
<dbReference type="OrthoDB" id="9807419at2"/>
<dbReference type="Proteomes" id="UP000001420">
    <property type="component" value="Chromosome"/>
</dbReference>
<dbReference type="GO" id="GO:1990904">
    <property type="term" value="C:ribonucleoprotein complex"/>
    <property type="evidence" value="ECO:0007669"/>
    <property type="project" value="UniProtKB-KW"/>
</dbReference>
<dbReference type="GO" id="GO:0005840">
    <property type="term" value="C:ribosome"/>
    <property type="evidence" value="ECO:0007669"/>
    <property type="project" value="UniProtKB-KW"/>
</dbReference>
<dbReference type="GO" id="GO:0019843">
    <property type="term" value="F:rRNA binding"/>
    <property type="evidence" value="ECO:0007669"/>
    <property type="project" value="UniProtKB-UniRule"/>
</dbReference>
<dbReference type="GO" id="GO:0003735">
    <property type="term" value="F:structural constituent of ribosome"/>
    <property type="evidence" value="ECO:0007669"/>
    <property type="project" value="InterPro"/>
</dbReference>
<dbReference type="GO" id="GO:0006412">
    <property type="term" value="P:translation"/>
    <property type="evidence" value="ECO:0007669"/>
    <property type="project" value="UniProtKB-UniRule"/>
</dbReference>
<dbReference type="CDD" id="cd06089">
    <property type="entry name" value="KOW_RPL26"/>
    <property type="match status" value="1"/>
</dbReference>
<dbReference type="Gene3D" id="2.30.30.30">
    <property type="match status" value="1"/>
</dbReference>
<dbReference type="HAMAP" id="MF_01326_B">
    <property type="entry name" value="Ribosomal_uL24_B"/>
    <property type="match status" value="1"/>
</dbReference>
<dbReference type="InterPro" id="IPR005824">
    <property type="entry name" value="KOW"/>
</dbReference>
<dbReference type="InterPro" id="IPR014722">
    <property type="entry name" value="Rib_uL2_dom2"/>
</dbReference>
<dbReference type="InterPro" id="IPR003256">
    <property type="entry name" value="Ribosomal_uL24"/>
</dbReference>
<dbReference type="InterPro" id="IPR005825">
    <property type="entry name" value="Ribosomal_uL24_CS"/>
</dbReference>
<dbReference type="InterPro" id="IPR041988">
    <property type="entry name" value="Ribosomal_uL24_KOW"/>
</dbReference>
<dbReference type="InterPro" id="IPR008991">
    <property type="entry name" value="Translation_prot_SH3-like_sf"/>
</dbReference>
<dbReference type="NCBIfam" id="TIGR01079">
    <property type="entry name" value="rplX_bact"/>
    <property type="match status" value="1"/>
</dbReference>
<dbReference type="PANTHER" id="PTHR12903">
    <property type="entry name" value="MITOCHONDRIAL RIBOSOMAL PROTEIN L24"/>
    <property type="match status" value="1"/>
</dbReference>
<dbReference type="Pfam" id="PF00467">
    <property type="entry name" value="KOW"/>
    <property type="match status" value="1"/>
</dbReference>
<dbReference type="Pfam" id="PF17136">
    <property type="entry name" value="ribosomal_L24"/>
    <property type="match status" value="1"/>
</dbReference>
<dbReference type="SMART" id="SM00739">
    <property type="entry name" value="KOW"/>
    <property type="match status" value="1"/>
</dbReference>
<dbReference type="SUPFAM" id="SSF50104">
    <property type="entry name" value="Translation proteins SH3-like domain"/>
    <property type="match status" value="1"/>
</dbReference>
<dbReference type="PROSITE" id="PS01108">
    <property type="entry name" value="RIBOSOMAL_L24"/>
    <property type="match status" value="1"/>
</dbReference>
<feature type="chain" id="PRO_0000130693" description="Large ribosomal subunit protein uL24">
    <location>
        <begin position="1"/>
        <end position="118"/>
    </location>
</feature>
<keyword id="KW-1185">Reference proteome</keyword>
<keyword id="KW-0687">Ribonucleoprotein</keyword>
<keyword id="KW-0689">Ribosomal protein</keyword>
<keyword id="KW-0694">RNA-binding</keyword>
<keyword id="KW-0699">rRNA-binding</keyword>
<organism>
    <name type="scientific">Prochlorococcus marinus (strain SARG / CCMP1375 / SS120)</name>
    <dbReference type="NCBI Taxonomy" id="167539"/>
    <lineage>
        <taxon>Bacteria</taxon>
        <taxon>Bacillati</taxon>
        <taxon>Cyanobacteriota</taxon>
        <taxon>Cyanophyceae</taxon>
        <taxon>Synechococcales</taxon>
        <taxon>Prochlorococcaceae</taxon>
        <taxon>Prochlorococcus</taxon>
    </lineage>
</organism>
<proteinExistence type="inferred from homology"/>
<reference key="1">
    <citation type="journal article" date="2003" name="Proc. Natl. Acad. Sci. U.S.A.">
        <title>Genome sequence of the cyanobacterium Prochlorococcus marinus SS120, a nearly minimal oxyphototrophic genome.</title>
        <authorList>
            <person name="Dufresne A."/>
            <person name="Salanoubat M."/>
            <person name="Partensky F."/>
            <person name="Artiguenave F."/>
            <person name="Axmann I.M."/>
            <person name="Barbe V."/>
            <person name="Duprat S."/>
            <person name="Galperin M.Y."/>
            <person name="Koonin E.V."/>
            <person name="Le Gall F."/>
            <person name="Makarova K.S."/>
            <person name="Ostrowski M."/>
            <person name="Oztas S."/>
            <person name="Robert C."/>
            <person name="Rogozin I.B."/>
            <person name="Scanlan D.J."/>
            <person name="Tandeau de Marsac N."/>
            <person name="Weissenbach J."/>
            <person name="Wincker P."/>
            <person name="Wolf Y.I."/>
            <person name="Hess W.R."/>
        </authorList>
    </citation>
    <scope>NUCLEOTIDE SEQUENCE [LARGE SCALE GENOMIC DNA]</scope>
    <source>
        <strain>SARG / CCMP1375 / SS120</strain>
    </source>
</reference>
<name>RL24_PROMA</name>
<evidence type="ECO:0000255" key="1">
    <source>
        <dbReference type="HAMAP-Rule" id="MF_01326"/>
    </source>
</evidence>
<evidence type="ECO:0000305" key="2"/>
<comment type="function">
    <text evidence="1">One of two assembly initiator proteins, it binds directly to the 5'-end of the 23S rRNA, where it nucleates assembly of the 50S subunit.</text>
</comment>
<comment type="function">
    <text evidence="1">One of the proteins that surrounds the polypeptide exit tunnel on the outside of the subunit.</text>
</comment>
<comment type="subunit">
    <text evidence="1">Part of the 50S ribosomal subunit.</text>
</comment>
<comment type="similarity">
    <text evidence="1">Belongs to the universal ribosomal protein uL24 family.</text>
</comment>
<accession>Q7V9X3</accession>
<sequence length="118" mass="13271">MFNLNQTKKASLPIKMRIRKGDTVQVINGKEKGKTGEVLKTLPIENRVIVQGINLRTRHVKPTQEGESGRIVTEEASLHASNVMVYSTKQKTASRVEVFIDKDGSKKRRLKKTGELID</sequence>
<gene>
    <name evidence="1" type="primary">rplX</name>
    <name evidence="1" type="synonym">rpl24</name>
    <name type="ordered locus">Pro_1701</name>
</gene>